<name>CYSZ_SALTI</name>
<feature type="chain" id="PRO_0000204348" description="Sulfate transporter CysZ">
    <location>
        <begin position="1"/>
        <end position="253"/>
    </location>
</feature>
<feature type="transmembrane region" description="Helical" evidence="1">
    <location>
        <begin position="31"/>
        <end position="51"/>
    </location>
</feature>
<feature type="transmembrane region" description="Helical" evidence="1">
    <location>
        <begin position="72"/>
        <end position="92"/>
    </location>
</feature>
<feature type="transmembrane region" description="Helical" evidence="1">
    <location>
        <begin position="151"/>
        <end position="171"/>
    </location>
</feature>
<feature type="transmembrane region" description="Helical" evidence="1">
    <location>
        <begin position="222"/>
        <end position="242"/>
    </location>
</feature>
<evidence type="ECO:0000255" key="1">
    <source>
        <dbReference type="HAMAP-Rule" id="MF_00468"/>
    </source>
</evidence>
<protein>
    <recommendedName>
        <fullName evidence="1">Sulfate transporter CysZ</fullName>
    </recommendedName>
</protein>
<sequence length="253" mass="28893">MVSSSTTVPRSGVYYFSQGWKLVTLPGIRRFVILPLLVNIVLMGGAFWWLFTQLDAWIPSLMSHVPDWLQWLSYLLWPIAVISVLLVFGYFFSTLANWIAAPFNGLLAEQLEARLTGATPPDTGILGIMKDVPRIMKREWQKLAWYLPRAIVLLVLYFIPGIGQTIAPVLWFLFSAWMLAIQYCDYPFDNHKVPFKTMRAALRTQKVANMQFGALTSLFTMIPVLNLFIMPVAVCGATAMWVDCWRAKHALWK</sequence>
<reference key="1">
    <citation type="journal article" date="2001" name="Nature">
        <title>Complete genome sequence of a multiple drug resistant Salmonella enterica serovar Typhi CT18.</title>
        <authorList>
            <person name="Parkhill J."/>
            <person name="Dougan G."/>
            <person name="James K.D."/>
            <person name="Thomson N.R."/>
            <person name="Pickard D."/>
            <person name="Wain J."/>
            <person name="Churcher C.M."/>
            <person name="Mungall K.L."/>
            <person name="Bentley S.D."/>
            <person name="Holden M.T.G."/>
            <person name="Sebaihia M."/>
            <person name="Baker S."/>
            <person name="Basham D."/>
            <person name="Brooks K."/>
            <person name="Chillingworth T."/>
            <person name="Connerton P."/>
            <person name="Cronin A."/>
            <person name="Davis P."/>
            <person name="Davies R.M."/>
            <person name="Dowd L."/>
            <person name="White N."/>
            <person name="Farrar J."/>
            <person name="Feltwell T."/>
            <person name="Hamlin N."/>
            <person name="Haque A."/>
            <person name="Hien T.T."/>
            <person name="Holroyd S."/>
            <person name="Jagels K."/>
            <person name="Krogh A."/>
            <person name="Larsen T.S."/>
            <person name="Leather S."/>
            <person name="Moule S."/>
            <person name="O'Gaora P."/>
            <person name="Parry C."/>
            <person name="Quail M.A."/>
            <person name="Rutherford K.M."/>
            <person name="Simmonds M."/>
            <person name="Skelton J."/>
            <person name="Stevens K."/>
            <person name="Whitehead S."/>
            <person name="Barrell B.G."/>
        </authorList>
    </citation>
    <scope>NUCLEOTIDE SEQUENCE [LARGE SCALE GENOMIC DNA]</scope>
    <source>
        <strain>CT18</strain>
    </source>
</reference>
<reference key="2">
    <citation type="journal article" date="2003" name="J. Bacteriol.">
        <title>Comparative genomics of Salmonella enterica serovar Typhi strains Ty2 and CT18.</title>
        <authorList>
            <person name="Deng W."/>
            <person name="Liou S.-R."/>
            <person name="Plunkett G. III"/>
            <person name="Mayhew G.F."/>
            <person name="Rose D.J."/>
            <person name="Burland V."/>
            <person name="Kodoyianni V."/>
            <person name="Schwartz D.C."/>
            <person name="Blattner F.R."/>
        </authorList>
    </citation>
    <scope>NUCLEOTIDE SEQUENCE [LARGE SCALE GENOMIC DNA]</scope>
    <source>
        <strain>ATCC 700931 / Ty2</strain>
    </source>
</reference>
<dbReference type="EMBL" id="AL513382">
    <property type="protein sequence ID" value="CAD07661.1"/>
    <property type="molecule type" value="Genomic_DNA"/>
</dbReference>
<dbReference type="EMBL" id="AE014613">
    <property type="protein sequence ID" value="AAO68146.1"/>
    <property type="molecule type" value="Genomic_DNA"/>
</dbReference>
<dbReference type="RefSeq" id="NP_456966.1">
    <property type="nucleotide sequence ID" value="NC_003198.1"/>
</dbReference>
<dbReference type="RefSeq" id="WP_000255008.1">
    <property type="nucleotide sequence ID" value="NZ_WSUR01000025.1"/>
</dbReference>
<dbReference type="SMR" id="Q8Z4W3"/>
<dbReference type="STRING" id="220341.gene:17586565"/>
<dbReference type="KEGG" id="stt:t0428"/>
<dbReference type="KEGG" id="sty:STY2665"/>
<dbReference type="PATRIC" id="fig|220341.7.peg.2701"/>
<dbReference type="eggNOG" id="COG2981">
    <property type="taxonomic scope" value="Bacteria"/>
</dbReference>
<dbReference type="HOGENOM" id="CLU_070331_1_0_6"/>
<dbReference type="OMA" id="PFADDWS"/>
<dbReference type="OrthoDB" id="5292355at2"/>
<dbReference type="Proteomes" id="UP000000541">
    <property type="component" value="Chromosome"/>
</dbReference>
<dbReference type="Proteomes" id="UP000002670">
    <property type="component" value="Chromosome"/>
</dbReference>
<dbReference type="GO" id="GO:0005886">
    <property type="term" value="C:plasma membrane"/>
    <property type="evidence" value="ECO:0007669"/>
    <property type="project" value="UniProtKB-SubCell"/>
</dbReference>
<dbReference type="GO" id="GO:0009675">
    <property type="term" value="F:high-affinity sulfate:proton symporter activity"/>
    <property type="evidence" value="ECO:0007669"/>
    <property type="project" value="TreeGrafter"/>
</dbReference>
<dbReference type="GO" id="GO:0019344">
    <property type="term" value="P:cysteine biosynthetic process"/>
    <property type="evidence" value="ECO:0007669"/>
    <property type="project" value="UniProtKB-UniRule"/>
</dbReference>
<dbReference type="GO" id="GO:0000103">
    <property type="term" value="P:sulfate assimilation"/>
    <property type="evidence" value="ECO:0007669"/>
    <property type="project" value="InterPro"/>
</dbReference>
<dbReference type="HAMAP" id="MF_00468">
    <property type="entry name" value="CysZ"/>
    <property type="match status" value="1"/>
</dbReference>
<dbReference type="InterPro" id="IPR050480">
    <property type="entry name" value="CysZ_sulfate_transptr"/>
</dbReference>
<dbReference type="InterPro" id="IPR022985">
    <property type="entry name" value="Sulfate_CysZ"/>
</dbReference>
<dbReference type="NCBIfam" id="NF003433">
    <property type="entry name" value="PRK04949.1"/>
    <property type="match status" value="1"/>
</dbReference>
<dbReference type="PANTHER" id="PTHR37468">
    <property type="entry name" value="SULFATE TRANSPORTER CYSZ"/>
    <property type="match status" value="1"/>
</dbReference>
<dbReference type="PANTHER" id="PTHR37468:SF1">
    <property type="entry name" value="SULFATE TRANSPORTER CYSZ"/>
    <property type="match status" value="1"/>
</dbReference>
<dbReference type="Pfam" id="PF07264">
    <property type="entry name" value="EI24"/>
    <property type="match status" value="1"/>
</dbReference>
<keyword id="KW-0028">Amino-acid biosynthesis</keyword>
<keyword id="KW-0997">Cell inner membrane</keyword>
<keyword id="KW-1003">Cell membrane</keyword>
<keyword id="KW-0198">Cysteine biosynthesis</keyword>
<keyword id="KW-0472">Membrane</keyword>
<keyword id="KW-0764">Sulfate transport</keyword>
<keyword id="KW-0812">Transmembrane</keyword>
<keyword id="KW-1133">Transmembrane helix</keyword>
<keyword id="KW-0813">Transport</keyword>
<proteinExistence type="inferred from homology"/>
<accession>Q8Z4W3</accession>
<comment type="function">
    <text evidence="1">High affinity, high specificity proton-dependent sulfate transporter, which mediates sulfate uptake. Provides the sulfur source for the cysteine synthesis pathway.</text>
</comment>
<comment type="subcellular location">
    <subcellularLocation>
        <location evidence="1">Cell inner membrane</location>
        <topology evidence="1">Multi-pass membrane protein</topology>
    </subcellularLocation>
</comment>
<comment type="similarity">
    <text evidence="1">Belongs to the CysZ family.</text>
</comment>
<organism>
    <name type="scientific">Salmonella typhi</name>
    <dbReference type="NCBI Taxonomy" id="90370"/>
    <lineage>
        <taxon>Bacteria</taxon>
        <taxon>Pseudomonadati</taxon>
        <taxon>Pseudomonadota</taxon>
        <taxon>Gammaproteobacteria</taxon>
        <taxon>Enterobacterales</taxon>
        <taxon>Enterobacteriaceae</taxon>
        <taxon>Salmonella</taxon>
    </lineage>
</organism>
<gene>
    <name evidence="1" type="primary">cysZ</name>
    <name type="ordered locus">STY2665</name>
    <name type="ordered locus">t0428</name>
</gene>